<gene>
    <name type="primary">ytm1</name>
    <name type="ORF">93G11.070</name>
    <name type="ORF">NCU03764</name>
</gene>
<organism>
    <name type="scientific">Neurospora crassa (strain ATCC 24698 / 74-OR23-1A / CBS 708.71 / DSM 1257 / FGSC 987)</name>
    <dbReference type="NCBI Taxonomy" id="367110"/>
    <lineage>
        <taxon>Eukaryota</taxon>
        <taxon>Fungi</taxon>
        <taxon>Dikarya</taxon>
        <taxon>Ascomycota</taxon>
        <taxon>Pezizomycotina</taxon>
        <taxon>Sordariomycetes</taxon>
        <taxon>Sordariomycetidae</taxon>
        <taxon>Sordariales</taxon>
        <taxon>Sordariaceae</taxon>
        <taxon>Neurospora</taxon>
    </lineage>
</organism>
<dbReference type="EMBL" id="AL513443">
    <property type="protein sequence ID" value="CAC28659.1"/>
    <property type="molecule type" value="Genomic_DNA"/>
</dbReference>
<dbReference type="EMBL" id="CM002240">
    <property type="protein sequence ID" value="ESA42456.1"/>
    <property type="molecule type" value="Genomic_DNA"/>
</dbReference>
<dbReference type="EMBL" id="CM002240">
    <property type="protein sequence ID" value="ESA42457.1"/>
    <property type="molecule type" value="Genomic_DNA"/>
</dbReference>
<dbReference type="RefSeq" id="XP_011394582.1">
    <property type="nucleotide sequence ID" value="XM_011396280.1"/>
</dbReference>
<dbReference type="RefSeq" id="XP_011394583.1">
    <property type="nucleotide sequence ID" value="XM_011396281.1"/>
</dbReference>
<dbReference type="SMR" id="Q9C2I5"/>
<dbReference type="FunCoup" id="Q9C2I5">
    <property type="interactions" value="860"/>
</dbReference>
<dbReference type="STRING" id="367110.Q9C2I5"/>
<dbReference type="PaxDb" id="5141-EFNCRP00000003292"/>
<dbReference type="EnsemblFungi" id="ESA42456">
    <property type="protein sequence ID" value="ESA42456"/>
    <property type="gene ID" value="NCU03764"/>
</dbReference>
<dbReference type="EnsemblFungi" id="ESA42457">
    <property type="protein sequence ID" value="ESA42457"/>
    <property type="gene ID" value="NCU03764"/>
</dbReference>
<dbReference type="GeneID" id="3877276"/>
<dbReference type="KEGG" id="ncr:NCU03764"/>
<dbReference type="VEuPathDB" id="FungiDB:NCU03764"/>
<dbReference type="HOGENOM" id="CLU_000288_57_0_1"/>
<dbReference type="InParanoid" id="Q9C2I5"/>
<dbReference type="OMA" id="DHKYVEF"/>
<dbReference type="Proteomes" id="UP000001805">
    <property type="component" value="Chromosome 2, Linkage Group V"/>
</dbReference>
<dbReference type="GO" id="GO:0005654">
    <property type="term" value="C:nucleoplasm"/>
    <property type="evidence" value="ECO:0007669"/>
    <property type="project" value="UniProtKB-SubCell"/>
</dbReference>
<dbReference type="GO" id="GO:0070545">
    <property type="term" value="C:PeBoW complex"/>
    <property type="evidence" value="ECO:0000318"/>
    <property type="project" value="GO_Central"/>
</dbReference>
<dbReference type="GO" id="GO:0030687">
    <property type="term" value="C:preribosome, large subunit precursor"/>
    <property type="evidence" value="ECO:0000318"/>
    <property type="project" value="GO_Central"/>
</dbReference>
<dbReference type="GO" id="GO:0043021">
    <property type="term" value="F:ribonucleoprotein complex binding"/>
    <property type="evidence" value="ECO:0007669"/>
    <property type="project" value="UniProtKB-UniRule"/>
</dbReference>
<dbReference type="GO" id="GO:0051276">
    <property type="term" value="P:chromosome organization"/>
    <property type="evidence" value="ECO:0007669"/>
    <property type="project" value="EnsemblFungi"/>
</dbReference>
<dbReference type="GO" id="GO:0000466">
    <property type="term" value="P:maturation of 5.8S rRNA from tricistronic rRNA transcript (SSU-rRNA, 5.8S rRNA, LSU-rRNA)"/>
    <property type="evidence" value="ECO:0007669"/>
    <property type="project" value="UniProtKB-UniRule"/>
</dbReference>
<dbReference type="GO" id="GO:0000463">
    <property type="term" value="P:maturation of LSU-rRNA from tricistronic rRNA transcript (SSU-rRNA, 5.8S rRNA, LSU-rRNA)"/>
    <property type="evidence" value="ECO:0007669"/>
    <property type="project" value="UniProtKB-UniRule"/>
</dbReference>
<dbReference type="GO" id="GO:0110136">
    <property type="term" value="P:protein-RNA complex remodeling"/>
    <property type="evidence" value="ECO:0007669"/>
    <property type="project" value="EnsemblFungi"/>
</dbReference>
<dbReference type="GO" id="GO:0042273">
    <property type="term" value="P:ribosomal large subunit biogenesis"/>
    <property type="evidence" value="ECO:0000318"/>
    <property type="project" value="GO_Central"/>
</dbReference>
<dbReference type="FunFam" id="2.130.10.10:FF:000593">
    <property type="entry name" value="Ribosome biogenesis protein ytm1"/>
    <property type="match status" value="1"/>
</dbReference>
<dbReference type="Gene3D" id="2.130.10.10">
    <property type="entry name" value="YVTN repeat-like/Quinoprotein amine dehydrogenase"/>
    <property type="match status" value="1"/>
</dbReference>
<dbReference type="HAMAP" id="MF_03029">
    <property type="entry name" value="WDR12"/>
    <property type="match status" value="1"/>
</dbReference>
<dbReference type="InterPro" id="IPR020472">
    <property type="entry name" value="G-protein_beta_WD-40_rep"/>
</dbReference>
<dbReference type="InterPro" id="IPR012972">
    <property type="entry name" value="NLE"/>
</dbReference>
<dbReference type="InterPro" id="IPR015943">
    <property type="entry name" value="WD40/YVTN_repeat-like_dom_sf"/>
</dbReference>
<dbReference type="InterPro" id="IPR019775">
    <property type="entry name" value="WD40_repeat_CS"/>
</dbReference>
<dbReference type="InterPro" id="IPR036322">
    <property type="entry name" value="WD40_repeat_dom_sf"/>
</dbReference>
<dbReference type="InterPro" id="IPR001680">
    <property type="entry name" value="WD40_rpt"/>
</dbReference>
<dbReference type="InterPro" id="IPR028599">
    <property type="entry name" value="WDR12/Ytm1"/>
</dbReference>
<dbReference type="PANTHER" id="PTHR19855:SF11">
    <property type="entry name" value="RIBOSOME BIOGENESIS PROTEIN WDR12"/>
    <property type="match status" value="1"/>
</dbReference>
<dbReference type="PANTHER" id="PTHR19855">
    <property type="entry name" value="WD40 REPEAT PROTEIN 12, 37"/>
    <property type="match status" value="1"/>
</dbReference>
<dbReference type="Pfam" id="PF08154">
    <property type="entry name" value="NLE"/>
    <property type="match status" value="1"/>
</dbReference>
<dbReference type="Pfam" id="PF00400">
    <property type="entry name" value="WD40"/>
    <property type="match status" value="4"/>
</dbReference>
<dbReference type="PRINTS" id="PR00320">
    <property type="entry name" value="GPROTEINBRPT"/>
</dbReference>
<dbReference type="SMART" id="SM00320">
    <property type="entry name" value="WD40"/>
    <property type="match status" value="7"/>
</dbReference>
<dbReference type="SUPFAM" id="SSF50978">
    <property type="entry name" value="WD40 repeat-like"/>
    <property type="match status" value="1"/>
</dbReference>
<dbReference type="PROSITE" id="PS00678">
    <property type="entry name" value="WD_REPEATS_1"/>
    <property type="match status" value="2"/>
</dbReference>
<dbReference type="PROSITE" id="PS50082">
    <property type="entry name" value="WD_REPEATS_2"/>
    <property type="match status" value="3"/>
</dbReference>
<dbReference type="PROSITE" id="PS50294">
    <property type="entry name" value="WD_REPEATS_REGION"/>
    <property type="match status" value="1"/>
</dbReference>
<evidence type="ECO:0000255" key="1">
    <source>
        <dbReference type="HAMAP-Rule" id="MF_03029"/>
    </source>
</evidence>
<accession>Q9C2I5</accession>
<accession>V5ILF1</accession>
<feature type="chain" id="PRO_0000369595" description="Ribosome biogenesis protein ytm1">
    <location>
        <begin position="1"/>
        <end position="487"/>
    </location>
</feature>
<feature type="repeat" description="WD 1">
    <location>
        <begin position="120"/>
        <end position="159"/>
    </location>
</feature>
<feature type="repeat" description="WD 2">
    <location>
        <begin position="166"/>
        <end position="204"/>
    </location>
</feature>
<feature type="repeat" description="WD 3">
    <location>
        <begin position="217"/>
        <end position="256"/>
    </location>
</feature>
<feature type="repeat" description="WD 4">
    <location>
        <begin position="290"/>
        <end position="330"/>
    </location>
</feature>
<feature type="repeat" description="WD 5">
    <location>
        <begin position="381"/>
        <end position="421"/>
    </location>
</feature>
<feature type="repeat" description="WD 6">
    <location>
        <begin position="452"/>
        <end position="487"/>
    </location>
</feature>
<feature type="region of interest" description="Ubiquitin-like (UBL) domain" evidence="1">
    <location>
        <begin position="11"/>
        <end position="93"/>
    </location>
</feature>
<protein>
    <recommendedName>
        <fullName evidence="1">Ribosome biogenesis protein ytm1</fullName>
    </recommendedName>
</protein>
<comment type="function">
    <text evidence="1">Component of the NOP7 complex, which is required for maturation of the 25S and 5.8S ribosomal RNAs and formation of the 60S ribosome.</text>
</comment>
<comment type="subunit">
    <text evidence="1">Component of the NOP7 complex, composed of erb1, nop7 and ytm1. The complex is held together by erb1, which interacts with nop7 via its N-terminal domain and with ytm1 via a high-affinity interaction between the seven-bladed beta-propeller domains of the 2 proteins. The NOP7 complex associates with the 66S pre-ribosome. Interacts (via UBL domain) with rbg-35/mdn1 (via VWFA/MIDAS domain).</text>
</comment>
<comment type="subcellular location">
    <subcellularLocation>
        <location evidence="1">Nucleus</location>
        <location evidence="1">Nucleolus</location>
    </subcellularLocation>
    <subcellularLocation>
        <location evidence="1">Nucleus</location>
        <location evidence="1">Nucleoplasm</location>
    </subcellularLocation>
</comment>
<comment type="similarity">
    <text evidence="1">Belongs to the WD repeat WDR12/YTM1 family.</text>
</comment>
<sequence>MDHPTESGAQVRVTFTTQEEDIQLDESKRQLLVPADIRRYGLSRILNSESMLDTNSIPFDFLVNGSFLRGSLEEYLNANGLSLETNITLQYVRSLIPPTYEASFEHDDWVSAVDVLSATSPAGRWSGDNFQRGQDRILSASYDGLLRIWDASGNVIGTSPSGSHGGHTASIKAAKFLSSTQIASAGMDRTVRVWKYTESGESYERRGELKPTLELYGHTSSIDSLEVDGASKRILTASADGSIGFWTTSKASAPEVSDSSLLPGAHTSKRRKLATSVTAAQRGPLALMNIHNAPATAAVFDPRDRTVAYSVSQDHTVKTIDLTTSSVVSTFTTSHALLSLAALPRSSASAPLLACGTSARHITLVDPRTSTAATSVMTLRGHANKVVSLAANPENEYSLVSGSHDGTCRIWDLRSVRPATKDEGGMGSVSEPVYVIDRESQQGKKKKSSVTGDGCKVFSVVWDQLGIFSGGEDKKVQINKGRGVNAE</sequence>
<name>YTM1_NEUCR</name>
<keyword id="KW-0539">Nucleus</keyword>
<keyword id="KW-1185">Reference proteome</keyword>
<keyword id="KW-0677">Repeat</keyword>
<keyword id="KW-0690">Ribosome biogenesis</keyword>
<keyword id="KW-0698">rRNA processing</keyword>
<keyword id="KW-0853">WD repeat</keyword>
<proteinExistence type="inferred from homology"/>
<reference key="1">
    <citation type="journal article" date="2003" name="Nucleic Acids Res.">
        <title>What's in the genome of a filamentous fungus? Analysis of the Neurospora genome sequence.</title>
        <authorList>
            <person name="Mannhaupt G."/>
            <person name="Montrone C."/>
            <person name="Haase D."/>
            <person name="Mewes H.-W."/>
            <person name="Aign V."/>
            <person name="Hoheisel J.D."/>
            <person name="Fartmann B."/>
            <person name="Nyakatura G."/>
            <person name="Kempken F."/>
            <person name="Maier J."/>
            <person name="Schulte U."/>
        </authorList>
    </citation>
    <scope>NUCLEOTIDE SEQUENCE [LARGE SCALE GENOMIC DNA]</scope>
    <source>
        <strain>ATCC 24698 / 74-OR23-1A / CBS 708.71 / DSM 1257 / FGSC 987</strain>
    </source>
</reference>
<reference key="2">
    <citation type="journal article" date="2003" name="Nature">
        <title>The genome sequence of the filamentous fungus Neurospora crassa.</title>
        <authorList>
            <person name="Galagan J.E."/>
            <person name="Calvo S.E."/>
            <person name="Borkovich K.A."/>
            <person name="Selker E.U."/>
            <person name="Read N.D."/>
            <person name="Jaffe D.B."/>
            <person name="FitzHugh W."/>
            <person name="Ma L.-J."/>
            <person name="Smirnov S."/>
            <person name="Purcell S."/>
            <person name="Rehman B."/>
            <person name="Elkins T."/>
            <person name="Engels R."/>
            <person name="Wang S."/>
            <person name="Nielsen C.B."/>
            <person name="Butler J."/>
            <person name="Endrizzi M."/>
            <person name="Qui D."/>
            <person name="Ianakiev P."/>
            <person name="Bell-Pedersen D."/>
            <person name="Nelson M.A."/>
            <person name="Werner-Washburne M."/>
            <person name="Selitrennikoff C.P."/>
            <person name="Kinsey J.A."/>
            <person name="Braun E.L."/>
            <person name="Zelter A."/>
            <person name="Schulte U."/>
            <person name="Kothe G.O."/>
            <person name="Jedd G."/>
            <person name="Mewes H.-W."/>
            <person name="Staben C."/>
            <person name="Marcotte E."/>
            <person name="Greenberg D."/>
            <person name="Roy A."/>
            <person name="Foley K."/>
            <person name="Naylor J."/>
            <person name="Stange-Thomann N."/>
            <person name="Barrett R."/>
            <person name="Gnerre S."/>
            <person name="Kamal M."/>
            <person name="Kamvysselis M."/>
            <person name="Mauceli E.W."/>
            <person name="Bielke C."/>
            <person name="Rudd S."/>
            <person name="Frishman D."/>
            <person name="Krystofova S."/>
            <person name="Rasmussen C."/>
            <person name="Metzenberg R.L."/>
            <person name="Perkins D.D."/>
            <person name="Kroken S."/>
            <person name="Cogoni C."/>
            <person name="Macino G."/>
            <person name="Catcheside D.E.A."/>
            <person name="Li W."/>
            <person name="Pratt R.J."/>
            <person name="Osmani S.A."/>
            <person name="DeSouza C.P.C."/>
            <person name="Glass N.L."/>
            <person name="Orbach M.J."/>
            <person name="Berglund J.A."/>
            <person name="Voelker R."/>
            <person name="Yarden O."/>
            <person name="Plamann M."/>
            <person name="Seiler S."/>
            <person name="Dunlap J.C."/>
            <person name="Radford A."/>
            <person name="Aramayo R."/>
            <person name="Natvig D.O."/>
            <person name="Alex L.A."/>
            <person name="Mannhaupt G."/>
            <person name="Ebbole D.J."/>
            <person name="Freitag M."/>
            <person name="Paulsen I."/>
            <person name="Sachs M.S."/>
            <person name="Lander E.S."/>
            <person name="Nusbaum C."/>
            <person name="Birren B.W."/>
        </authorList>
    </citation>
    <scope>NUCLEOTIDE SEQUENCE [LARGE SCALE GENOMIC DNA]</scope>
    <source>
        <strain>ATCC 24698 / 74-OR23-1A / CBS 708.71 / DSM 1257 / FGSC 987</strain>
    </source>
</reference>